<evidence type="ECO:0000250" key="1">
    <source>
        <dbReference type="UniProtKB" id="D0RB01"/>
    </source>
</evidence>
<evidence type="ECO:0000250" key="2">
    <source>
        <dbReference type="UniProtKB" id="O75317"/>
    </source>
</evidence>
<evidence type="ECO:0000255" key="3">
    <source>
        <dbReference type="PROSITE-ProRule" id="PRU01035"/>
    </source>
</evidence>
<evidence type="ECO:0000256" key="4">
    <source>
        <dbReference type="SAM" id="MobiDB-lite"/>
    </source>
</evidence>
<evidence type="ECO:0000269" key="5">
    <source>
    </source>
</evidence>
<evidence type="ECO:0000269" key="6">
    <source>
    </source>
</evidence>
<evidence type="ECO:0000269" key="7">
    <source>
    </source>
</evidence>
<evidence type="ECO:0000303" key="8">
    <source>
    </source>
</evidence>
<evidence type="ECO:0000305" key="9"/>
<evidence type="ECO:0000312" key="10">
    <source>
        <dbReference type="MGI" id="MGI:1270128"/>
    </source>
</evidence>
<evidence type="ECO:0000312" key="11">
    <source>
        <dbReference type="Proteomes" id="UP000000589"/>
    </source>
</evidence>
<feature type="chain" id="PRO_0000260312" description="Ubiquitin carboxyl-terminal hydrolase 12">
    <location>
        <begin position="1"/>
        <end position="370"/>
    </location>
</feature>
<feature type="domain" description="USP" evidence="3">
    <location>
        <begin position="39"/>
        <end position="369"/>
    </location>
</feature>
<feature type="region of interest" description="Disordered" evidence="4">
    <location>
        <begin position="146"/>
        <end position="168"/>
    </location>
</feature>
<feature type="short sequence motif" description="Required for plasma membrane localization of USP12/WDR20" evidence="2">
    <location>
        <begin position="1"/>
        <end position="4"/>
    </location>
</feature>
<feature type="compositionally biased region" description="Basic and acidic residues" evidence="4">
    <location>
        <begin position="146"/>
        <end position="157"/>
    </location>
</feature>
<feature type="active site" description="Nucleophile" evidence="3">
    <location>
        <position position="48"/>
    </location>
</feature>
<feature type="active site" description="Proton acceptor" evidence="3">
    <location>
        <position position="317"/>
    </location>
</feature>
<feature type="binding site" evidence="2">
    <location>
        <position position="186"/>
    </location>
    <ligand>
        <name>Zn(2+)</name>
        <dbReference type="ChEBI" id="CHEBI:29105"/>
    </ligand>
</feature>
<feature type="binding site" evidence="2">
    <location>
        <position position="189"/>
    </location>
    <ligand>
        <name>Zn(2+)</name>
        <dbReference type="ChEBI" id="CHEBI:29105"/>
    </ligand>
</feature>
<feature type="binding site" evidence="2">
    <location>
        <position position="233"/>
    </location>
    <ligand>
        <name>Zn(2+)</name>
        <dbReference type="ChEBI" id="CHEBI:29105"/>
    </ligand>
</feature>
<feature type="binding site" evidence="2">
    <location>
        <position position="236"/>
    </location>
    <ligand>
        <name>Zn(2+)</name>
        <dbReference type="ChEBI" id="CHEBI:29105"/>
    </ligand>
</feature>
<feature type="splice variant" id="VSP_037617" description="In isoform 2." evidence="8">
    <location>
        <begin position="1"/>
        <end position="120"/>
    </location>
</feature>
<accession>Q9D9M2</accession>
<accession>Q790B0</accession>
<accession>Q7TNV4</accession>
<accession>Q80Y43</accession>
<accession>Q8CBN8</accession>
<reference key="1">
    <citation type="journal article" date="2005" name="Science">
        <title>The transcriptional landscape of the mammalian genome.</title>
        <authorList>
            <person name="Carninci P."/>
            <person name="Kasukawa T."/>
            <person name="Katayama S."/>
            <person name="Gough J."/>
            <person name="Frith M.C."/>
            <person name="Maeda N."/>
            <person name="Oyama R."/>
            <person name="Ravasi T."/>
            <person name="Lenhard B."/>
            <person name="Wells C."/>
            <person name="Kodzius R."/>
            <person name="Shimokawa K."/>
            <person name="Bajic V.B."/>
            <person name="Brenner S.E."/>
            <person name="Batalov S."/>
            <person name="Forrest A.R."/>
            <person name="Zavolan M."/>
            <person name="Davis M.J."/>
            <person name="Wilming L.G."/>
            <person name="Aidinis V."/>
            <person name="Allen J.E."/>
            <person name="Ambesi-Impiombato A."/>
            <person name="Apweiler R."/>
            <person name="Aturaliya R.N."/>
            <person name="Bailey T.L."/>
            <person name="Bansal M."/>
            <person name="Baxter L."/>
            <person name="Beisel K.W."/>
            <person name="Bersano T."/>
            <person name="Bono H."/>
            <person name="Chalk A.M."/>
            <person name="Chiu K.P."/>
            <person name="Choudhary V."/>
            <person name="Christoffels A."/>
            <person name="Clutterbuck D.R."/>
            <person name="Crowe M.L."/>
            <person name="Dalla E."/>
            <person name="Dalrymple B.P."/>
            <person name="de Bono B."/>
            <person name="Della Gatta G."/>
            <person name="di Bernardo D."/>
            <person name="Down T."/>
            <person name="Engstrom P."/>
            <person name="Fagiolini M."/>
            <person name="Faulkner G."/>
            <person name="Fletcher C.F."/>
            <person name="Fukushima T."/>
            <person name="Furuno M."/>
            <person name="Futaki S."/>
            <person name="Gariboldi M."/>
            <person name="Georgii-Hemming P."/>
            <person name="Gingeras T.R."/>
            <person name="Gojobori T."/>
            <person name="Green R.E."/>
            <person name="Gustincich S."/>
            <person name="Harbers M."/>
            <person name="Hayashi Y."/>
            <person name="Hensch T.K."/>
            <person name="Hirokawa N."/>
            <person name="Hill D."/>
            <person name="Huminiecki L."/>
            <person name="Iacono M."/>
            <person name="Ikeo K."/>
            <person name="Iwama A."/>
            <person name="Ishikawa T."/>
            <person name="Jakt M."/>
            <person name="Kanapin A."/>
            <person name="Katoh M."/>
            <person name="Kawasawa Y."/>
            <person name="Kelso J."/>
            <person name="Kitamura H."/>
            <person name="Kitano H."/>
            <person name="Kollias G."/>
            <person name="Krishnan S.P."/>
            <person name="Kruger A."/>
            <person name="Kummerfeld S.K."/>
            <person name="Kurochkin I.V."/>
            <person name="Lareau L.F."/>
            <person name="Lazarevic D."/>
            <person name="Lipovich L."/>
            <person name="Liu J."/>
            <person name="Liuni S."/>
            <person name="McWilliam S."/>
            <person name="Madan Babu M."/>
            <person name="Madera M."/>
            <person name="Marchionni L."/>
            <person name="Matsuda H."/>
            <person name="Matsuzawa S."/>
            <person name="Miki H."/>
            <person name="Mignone F."/>
            <person name="Miyake S."/>
            <person name="Morris K."/>
            <person name="Mottagui-Tabar S."/>
            <person name="Mulder N."/>
            <person name="Nakano N."/>
            <person name="Nakauchi H."/>
            <person name="Ng P."/>
            <person name="Nilsson R."/>
            <person name="Nishiguchi S."/>
            <person name="Nishikawa S."/>
            <person name="Nori F."/>
            <person name="Ohara O."/>
            <person name="Okazaki Y."/>
            <person name="Orlando V."/>
            <person name="Pang K.C."/>
            <person name="Pavan W.J."/>
            <person name="Pavesi G."/>
            <person name="Pesole G."/>
            <person name="Petrovsky N."/>
            <person name="Piazza S."/>
            <person name="Reed J."/>
            <person name="Reid J.F."/>
            <person name="Ring B.Z."/>
            <person name="Ringwald M."/>
            <person name="Rost B."/>
            <person name="Ruan Y."/>
            <person name="Salzberg S.L."/>
            <person name="Sandelin A."/>
            <person name="Schneider C."/>
            <person name="Schoenbach C."/>
            <person name="Sekiguchi K."/>
            <person name="Semple C.A."/>
            <person name="Seno S."/>
            <person name="Sessa L."/>
            <person name="Sheng Y."/>
            <person name="Shibata Y."/>
            <person name="Shimada H."/>
            <person name="Shimada K."/>
            <person name="Silva D."/>
            <person name="Sinclair B."/>
            <person name="Sperling S."/>
            <person name="Stupka E."/>
            <person name="Sugiura K."/>
            <person name="Sultana R."/>
            <person name="Takenaka Y."/>
            <person name="Taki K."/>
            <person name="Tammoja K."/>
            <person name="Tan S.L."/>
            <person name="Tang S."/>
            <person name="Taylor M.S."/>
            <person name="Tegner J."/>
            <person name="Teichmann S.A."/>
            <person name="Ueda H.R."/>
            <person name="van Nimwegen E."/>
            <person name="Verardo R."/>
            <person name="Wei C.L."/>
            <person name="Yagi K."/>
            <person name="Yamanishi H."/>
            <person name="Zabarovsky E."/>
            <person name="Zhu S."/>
            <person name="Zimmer A."/>
            <person name="Hide W."/>
            <person name="Bult C."/>
            <person name="Grimmond S.M."/>
            <person name="Teasdale R.D."/>
            <person name="Liu E.T."/>
            <person name="Brusic V."/>
            <person name="Quackenbush J."/>
            <person name="Wahlestedt C."/>
            <person name="Mattick J.S."/>
            <person name="Hume D.A."/>
            <person name="Kai C."/>
            <person name="Sasaki D."/>
            <person name="Tomaru Y."/>
            <person name="Fukuda S."/>
            <person name="Kanamori-Katayama M."/>
            <person name="Suzuki M."/>
            <person name="Aoki J."/>
            <person name="Arakawa T."/>
            <person name="Iida J."/>
            <person name="Imamura K."/>
            <person name="Itoh M."/>
            <person name="Kato T."/>
            <person name="Kawaji H."/>
            <person name="Kawagashira N."/>
            <person name="Kawashima T."/>
            <person name="Kojima M."/>
            <person name="Kondo S."/>
            <person name="Konno H."/>
            <person name="Nakano K."/>
            <person name="Ninomiya N."/>
            <person name="Nishio T."/>
            <person name="Okada M."/>
            <person name="Plessy C."/>
            <person name="Shibata K."/>
            <person name="Shiraki T."/>
            <person name="Suzuki S."/>
            <person name="Tagami M."/>
            <person name="Waki K."/>
            <person name="Watahiki A."/>
            <person name="Okamura-Oho Y."/>
            <person name="Suzuki H."/>
            <person name="Kawai J."/>
            <person name="Hayashizaki Y."/>
        </authorList>
    </citation>
    <scope>NUCLEOTIDE SEQUENCE [LARGE SCALE MRNA] (ISOFORM 1)</scope>
    <source>
        <strain>C57BL/6J</strain>
        <tissue>Testis</tissue>
        <tissue>Urinary bladder</tissue>
    </source>
</reference>
<reference key="2">
    <citation type="journal article" date="2004" name="Genome Res.">
        <title>The status, quality, and expansion of the NIH full-length cDNA project: the Mammalian Gene Collection (MGC).</title>
        <authorList>
            <consortium name="The MGC Project Team"/>
        </authorList>
    </citation>
    <scope>NUCLEOTIDE SEQUENCE [LARGE SCALE MRNA] (ISOFORMS 1 AND 2)</scope>
    <source>
        <strain>C57BL/6J</strain>
        <strain>FVB/N</strain>
        <tissue>Brain</tissue>
        <tissue>Liver</tissue>
    </source>
</reference>
<reference key="3">
    <citation type="journal article" date="2002" name="DNA Seq.">
        <title>Molecular cloning and complete cDNA sequence of UBH1 in mouse testis.</title>
        <authorList>
            <person name="Baek K.-H."/>
            <person name="Park K.-H."/>
            <person name="Kim Y.-S."/>
            <person name="Kim M.-S."/>
            <person name="Choi H.-K."/>
        </authorList>
    </citation>
    <scope>NUCLEOTIDE SEQUENCE [MRNA] OF 16-370 (ISOFORM 1)</scope>
    <source>
        <strain>C57BL/6J</strain>
        <tissue>Testis</tissue>
    </source>
</reference>
<reference key="4">
    <citation type="journal article" date="2012" name="J. Biol. Chem.">
        <title>The ubiquitin-specific protease 12 (USP12) is a negative regulator of notch signaling acting on notch receptor trafficking toward degradation.</title>
        <authorList>
            <person name="Moretti J."/>
            <person name="Chastagner P."/>
            <person name="Liang C.C."/>
            <person name="Cohn M.A."/>
            <person name="Israel A."/>
            <person name="Brou C."/>
        </authorList>
    </citation>
    <scope>FUNCTION</scope>
</reference>
<reference key="5">
    <citation type="journal article" date="2021" name="Cell Death Differ.">
        <title>USP12 promotes CD4+ T cell responses through deubiquitinating and stabilizing BCL10.</title>
        <authorList>
            <person name="Fu Y."/>
            <person name="Wang P."/>
            <person name="Zhao J."/>
            <person name="Tan Y."/>
            <person name="Sheng J."/>
            <person name="He S."/>
            <person name="Du X."/>
            <person name="Huang Y."/>
            <person name="Yang Y."/>
            <person name="Li J."/>
            <person name="Cai Y."/>
            <person name="Liu Y."/>
            <person name="Hu S."/>
        </authorList>
    </citation>
    <scope>FUNCTION</scope>
    <scope>DISRUPTION PHENOTYPE</scope>
</reference>
<reference key="6">
    <citation type="journal article" date="2022" name="Immunology">
        <title>USP12 positively regulates M-MDSC function to inhibit antitumour immunity through deubiquitinating and stabilizing p65.</title>
        <authorList>
            <person name="Zhan X."/>
            <person name="He Q."/>
            <person name="Sheng J."/>
            <person name="Jiang X."/>
            <person name="Lin L."/>
            <person name="Huang Y."/>
            <person name="He S."/>
            <person name="Chen Y."/>
            <person name="Li L."/>
            <person name="Zeng Z."/>
            <person name="Hu S."/>
            <person name="Wang P."/>
            <person name="Zhang Y."/>
        </authorList>
    </citation>
    <scope>FUNCTION</scope>
    <scope>DISRUPTION PHENOTYPE</scope>
</reference>
<keyword id="KW-0025">Alternative splicing</keyword>
<keyword id="KW-1003">Cell membrane</keyword>
<keyword id="KW-0963">Cytoplasm</keyword>
<keyword id="KW-0378">Hydrolase</keyword>
<keyword id="KW-0472">Membrane</keyword>
<keyword id="KW-0479">Metal-binding</keyword>
<keyword id="KW-0539">Nucleus</keyword>
<keyword id="KW-0645">Protease</keyword>
<keyword id="KW-1185">Reference proteome</keyword>
<keyword id="KW-0788">Thiol protease</keyword>
<keyword id="KW-0833">Ubl conjugation pathway</keyword>
<keyword id="KW-0862">Zinc</keyword>
<protein>
    <recommendedName>
        <fullName evidence="9">Ubiquitin carboxyl-terminal hydrolase 12</fullName>
        <ecNumber evidence="2">3.4.19.12</ecNumber>
    </recommendedName>
    <alternativeName>
        <fullName>Deubiquitinating enzyme 12</fullName>
    </alternativeName>
    <alternativeName>
        <fullName evidence="10">Ubiquitin specific peptidase 12</fullName>
    </alternativeName>
    <alternativeName>
        <fullName>Ubiquitin thioesterase 12</fullName>
    </alternativeName>
    <alternativeName>
        <fullName>Ubiquitin-hydrolyzing enzyme 1</fullName>
    </alternativeName>
    <alternativeName>
        <fullName>Ubiquitin-specific-processing protease 12</fullName>
    </alternativeName>
</protein>
<gene>
    <name type="primary">Usp12</name>
    <name type="synonym">Ubh1</name>
</gene>
<sequence>MEILMTVSKFASICTMGANASALEKEIGPEQFPVNEHYFGLVNFGNTCYCNSVLQALYFCRPFREKVLAYKSQPRKKENLLTCLADLFHSIATQKKKVGVIPPKKFITRLRKENELFDNYMQQDAHEFLNYLLNTIADILQEERKQEKQNGRLRNGDVDNEDNNSTPDPTWVHEIFQGTLTNETRCLTCETISSKDEDFLDLSVDVEQNTSITHCLRGFSNTETLCSEYKYYCEECRSKQEAHKRMKVKKLPLILALHLKRFKYMDQLHRYTKLSYRVVFPLELRLFNTSGDATNPDRMYDLVAVVVHCGSGPNRGHYIAIVKSHDFWLLFDDDIVEKIDAQAIEEFYGLTSDISKNSESGYILFYQSRD</sequence>
<organism evidence="11">
    <name type="scientific">Mus musculus</name>
    <name type="common">Mouse</name>
    <dbReference type="NCBI Taxonomy" id="10090"/>
    <lineage>
        <taxon>Eukaryota</taxon>
        <taxon>Metazoa</taxon>
        <taxon>Chordata</taxon>
        <taxon>Craniata</taxon>
        <taxon>Vertebrata</taxon>
        <taxon>Euteleostomi</taxon>
        <taxon>Mammalia</taxon>
        <taxon>Eutheria</taxon>
        <taxon>Euarchontoglires</taxon>
        <taxon>Glires</taxon>
        <taxon>Rodentia</taxon>
        <taxon>Myomorpha</taxon>
        <taxon>Muroidea</taxon>
        <taxon>Muridae</taxon>
        <taxon>Murinae</taxon>
        <taxon>Mus</taxon>
        <taxon>Mus</taxon>
    </lineage>
</organism>
<dbReference type="EC" id="3.4.19.12" evidence="2"/>
<dbReference type="EMBL" id="AK006739">
    <property type="protein sequence ID" value="BAB24720.2"/>
    <property type="molecule type" value="mRNA"/>
</dbReference>
<dbReference type="EMBL" id="AK035629">
    <property type="protein sequence ID" value="BAC29129.1"/>
    <property type="molecule type" value="mRNA"/>
</dbReference>
<dbReference type="EMBL" id="AK167153">
    <property type="protein sequence ID" value="BAE39295.1"/>
    <property type="molecule type" value="mRNA"/>
</dbReference>
<dbReference type="EMBL" id="BC049274">
    <property type="protein sequence ID" value="AAH49274.1"/>
    <property type="molecule type" value="mRNA"/>
</dbReference>
<dbReference type="EMBL" id="BC055398">
    <property type="protein sequence ID" value="AAH55398.1"/>
    <property type="molecule type" value="mRNA"/>
</dbReference>
<dbReference type="EMBL" id="BC068136">
    <property type="protein sequence ID" value="AAH68136.1"/>
    <property type="molecule type" value="mRNA"/>
</dbReference>
<dbReference type="EMBL" id="AF441835">
    <property type="protein sequence ID" value="AAL86740.1"/>
    <property type="molecule type" value="mRNA"/>
</dbReference>
<dbReference type="CCDS" id="CCDS39395.1">
    <molecule id="Q9D9M2-1"/>
</dbReference>
<dbReference type="RefSeq" id="NP_035799.1">
    <molecule id="Q9D9M2-1"/>
    <property type="nucleotide sequence ID" value="NM_011669.3"/>
</dbReference>
<dbReference type="RefSeq" id="XP_006504881.1">
    <property type="nucleotide sequence ID" value="XM_006504818.2"/>
</dbReference>
<dbReference type="RefSeq" id="XP_030110225.1">
    <molecule id="Q9D9M2-2"/>
    <property type="nucleotide sequence ID" value="XM_030254365.2"/>
</dbReference>
<dbReference type="SMR" id="Q9D9M2"/>
<dbReference type="BioGRID" id="204419">
    <property type="interactions" value="7"/>
</dbReference>
<dbReference type="FunCoup" id="Q9D9M2">
    <property type="interactions" value="4251"/>
</dbReference>
<dbReference type="IntAct" id="Q9D9M2">
    <property type="interactions" value="1"/>
</dbReference>
<dbReference type="STRING" id="10090.ENSMUSP00000082754"/>
<dbReference type="MEROPS" id="C19.020"/>
<dbReference type="iPTMnet" id="Q9D9M2"/>
<dbReference type="PhosphoSitePlus" id="Q9D9M2"/>
<dbReference type="SwissPalm" id="Q9D9M2"/>
<dbReference type="PaxDb" id="10090-ENSMUSP00000082754"/>
<dbReference type="PeptideAtlas" id="Q9D9M2"/>
<dbReference type="ProteomicsDB" id="298453">
    <molecule id="Q9D9M2-1"/>
</dbReference>
<dbReference type="ProteomicsDB" id="298454">
    <molecule id="Q9D9M2-2"/>
</dbReference>
<dbReference type="Pumba" id="Q9D9M2"/>
<dbReference type="Antibodypedia" id="22631">
    <property type="antibodies" value="280 antibodies from 28 providers"/>
</dbReference>
<dbReference type="DNASU" id="22217"/>
<dbReference type="Ensembl" id="ENSMUST00000085614.6">
    <molecule id="Q9D9M2-1"/>
    <property type="protein sequence ID" value="ENSMUSP00000082754.6"/>
    <property type="gene ID" value="ENSMUSG00000029640.18"/>
</dbReference>
<dbReference type="GeneID" id="22217"/>
<dbReference type="KEGG" id="mmu:22217"/>
<dbReference type="UCSC" id="uc009anj.1">
    <molecule id="Q9D9M2-1"/>
    <property type="organism name" value="mouse"/>
</dbReference>
<dbReference type="AGR" id="MGI:1270128"/>
<dbReference type="CTD" id="219333"/>
<dbReference type="MGI" id="MGI:1270128">
    <property type="gene designation" value="Usp12"/>
</dbReference>
<dbReference type="VEuPathDB" id="HostDB:ENSMUSG00000029640"/>
<dbReference type="eggNOG" id="KOG1864">
    <property type="taxonomic scope" value="Eukaryota"/>
</dbReference>
<dbReference type="GeneTree" id="ENSGT00940000153284"/>
<dbReference type="HOGENOM" id="CLU_008279_2_0_1"/>
<dbReference type="InParanoid" id="Q9D9M2"/>
<dbReference type="OMA" id="KSHNFWL"/>
<dbReference type="OrthoDB" id="27652at2759"/>
<dbReference type="PhylomeDB" id="Q9D9M2"/>
<dbReference type="TreeFam" id="TF314144"/>
<dbReference type="Reactome" id="R-MMU-5689880">
    <property type="pathway name" value="Ub-specific processing proteases"/>
</dbReference>
<dbReference type="BioGRID-ORCS" id="22217">
    <property type="hits" value="1 hit in 77 CRISPR screens"/>
</dbReference>
<dbReference type="ChiTaRS" id="Usp12">
    <property type="organism name" value="mouse"/>
</dbReference>
<dbReference type="PRO" id="PR:Q9D9M2"/>
<dbReference type="Proteomes" id="UP000000589">
    <property type="component" value="Chromosome 5"/>
</dbReference>
<dbReference type="RNAct" id="Q9D9M2">
    <property type="molecule type" value="protein"/>
</dbReference>
<dbReference type="Bgee" id="ENSMUSG00000029640">
    <property type="expression patterns" value="Expressed in retinal neural layer and 241 other cell types or tissues"/>
</dbReference>
<dbReference type="GO" id="GO:0005737">
    <property type="term" value="C:cytoplasm"/>
    <property type="evidence" value="ECO:0000250"/>
    <property type="project" value="UniProtKB"/>
</dbReference>
<dbReference type="GO" id="GO:0005829">
    <property type="term" value="C:cytosol"/>
    <property type="evidence" value="ECO:0000266"/>
    <property type="project" value="MGI"/>
</dbReference>
<dbReference type="GO" id="GO:0005634">
    <property type="term" value="C:nucleus"/>
    <property type="evidence" value="ECO:0000250"/>
    <property type="project" value="UniProtKB"/>
</dbReference>
<dbReference type="GO" id="GO:0005886">
    <property type="term" value="C:plasma membrane"/>
    <property type="evidence" value="ECO:0000250"/>
    <property type="project" value="UniProtKB"/>
</dbReference>
<dbReference type="GO" id="GO:0004843">
    <property type="term" value="F:cysteine-type deubiquitinase activity"/>
    <property type="evidence" value="ECO:0000250"/>
    <property type="project" value="UniProtKB"/>
</dbReference>
<dbReference type="GO" id="GO:0004197">
    <property type="term" value="F:cysteine-type endopeptidase activity"/>
    <property type="evidence" value="ECO:0000250"/>
    <property type="project" value="UniProtKB"/>
</dbReference>
<dbReference type="GO" id="GO:0101005">
    <property type="term" value="F:deubiquitinase activity"/>
    <property type="evidence" value="ECO:0000314"/>
    <property type="project" value="MGI"/>
</dbReference>
<dbReference type="GO" id="GO:0046872">
    <property type="term" value="F:metal ion binding"/>
    <property type="evidence" value="ECO:0007669"/>
    <property type="project" value="UniProtKB-KW"/>
</dbReference>
<dbReference type="GO" id="GO:0050862">
    <property type="term" value="P:positive regulation of T cell receptor signaling pathway"/>
    <property type="evidence" value="ECO:0000266"/>
    <property type="project" value="MGI"/>
</dbReference>
<dbReference type="GO" id="GO:0016579">
    <property type="term" value="P:protein deubiquitination"/>
    <property type="evidence" value="ECO:0000314"/>
    <property type="project" value="MGI"/>
</dbReference>
<dbReference type="GO" id="GO:0006508">
    <property type="term" value="P:proteolysis"/>
    <property type="evidence" value="ECO:0007669"/>
    <property type="project" value="UniProtKB-KW"/>
</dbReference>
<dbReference type="CDD" id="cd02663">
    <property type="entry name" value="Peptidase_C19G"/>
    <property type="match status" value="1"/>
</dbReference>
<dbReference type="FunFam" id="3.90.70.10:FF:000003">
    <property type="entry name" value="Ubiquitin carboxyl-terminal hydrolase 46"/>
    <property type="match status" value="1"/>
</dbReference>
<dbReference type="Gene3D" id="3.90.70.10">
    <property type="entry name" value="Cysteine proteinases"/>
    <property type="match status" value="1"/>
</dbReference>
<dbReference type="InterPro" id="IPR038765">
    <property type="entry name" value="Papain-like_cys_pep_sf"/>
</dbReference>
<dbReference type="InterPro" id="IPR050164">
    <property type="entry name" value="Peptidase_C19"/>
</dbReference>
<dbReference type="InterPro" id="IPR001394">
    <property type="entry name" value="Peptidase_C19_UCH"/>
</dbReference>
<dbReference type="InterPro" id="IPR018200">
    <property type="entry name" value="USP_CS"/>
</dbReference>
<dbReference type="InterPro" id="IPR028889">
    <property type="entry name" value="USP_dom"/>
</dbReference>
<dbReference type="PANTHER" id="PTHR24006">
    <property type="entry name" value="UBIQUITIN CARBOXYL-TERMINAL HYDROLASE"/>
    <property type="match status" value="1"/>
</dbReference>
<dbReference type="PANTHER" id="PTHR24006:SF647">
    <property type="entry name" value="UBIQUITIN CARBOXYL-TERMINAL HYDROLASE 12"/>
    <property type="match status" value="1"/>
</dbReference>
<dbReference type="Pfam" id="PF00443">
    <property type="entry name" value="UCH"/>
    <property type="match status" value="1"/>
</dbReference>
<dbReference type="SUPFAM" id="SSF54001">
    <property type="entry name" value="Cysteine proteinases"/>
    <property type="match status" value="1"/>
</dbReference>
<dbReference type="PROSITE" id="PS00972">
    <property type="entry name" value="USP_1"/>
    <property type="match status" value="1"/>
</dbReference>
<dbReference type="PROSITE" id="PS00973">
    <property type="entry name" value="USP_2"/>
    <property type="match status" value="1"/>
</dbReference>
<dbReference type="PROSITE" id="PS50235">
    <property type="entry name" value="USP_3"/>
    <property type="match status" value="1"/>
</dbReference>
<comment type="function">
    <text evidence="1 2 5 6 7">Deubiquitinating enzyme that plays various roles in the regulation of the immune response and inflammation. During TCR engagement and activation, translocates into the cytoplasm and deubiquitinates its substrates LAT and TRAT1 and prevents their lysosome-dependent degradation to stabilize the TCR signaling complex at the plasma membrane. Plays an essential role in the selective LPS-induced macrophage response through the activation of NF-kappa-B pathway. In addition, promotes that antiviral immune response through targeting DNA sensor IFI16 to inhibit its proteasome-dependent degradation. Participates in the interferon signaling pathway and antiviral response independently of its deubiquitinase activity by maintaining nuclear phosphorylated STAT1 levels via inhibition of its CREBBP-mediated acetylation and subsequent dephosphorylation (By similarity). Plays an intrinsic role in promoting the differentiation, activation and proliferation of CD4(+) T-cell by activating the NF-kappa-B signaling pathway through deubiquitinating and stabilizing B-cell lymphoma/leukemia 10/BCL10 (PubMed:33941870). In myeloid-derived suppressor cells promotes the activation of the NF-kappa-B via deubiquitination and stabilization of RELA (PubMed:35898171). Regulates the 'Lys-63'-linked polyubiquitin chains of BAX and thereby modulates the mitochondrial apoptotic process (By similarity). Negative regulator of NOTCH signaling that specifically deubiquitinates non-activated NOTCH receptors to target them for lysosomal degradation; deubiquitination of NOTCH stimulates its transport form late endosomes to lysosomes (PubMed:22778262). Protects neurons against HTT/huntingtin-induced polyglutamine expansion-dependent neurodegeneration through regulation of autophagic flux (By similarity). This function is independent of deubiquitinase activity or of other components of the USP12-WDR20-WDR48 deubiquitinating complex (By similarity). In complex with WDR48, acts as a potential tumor suppressor by positively regulating PHLPP1 stability (By similarity).</text>
</comment>
<comment type="catalytic activity">
    <reaction evidence="2">
        <text>Thiol-dependent hydrolysis of ester, thioester, amide, peptide and isopeptide bonds formed by the C-terminal Gly of ubiquitin (a 76-residue protein attached to proteins as an intracellular targeting signal).</text>
        <dbReference type="EC" id="3.4.19.12"/>
    </reaction>
</comment>
<comment type="activity regulation">
    <text evidence="2">Activated by interaction with WDR20; WDR48 and DMWD through different allosteric mechanisms.</text>
</comment>
<comment type="subunit">
    <text evidence="2">Interacts with WDR48. Interacts with WDR20; this interaction promotes translocation of the USP12 complex to the plasma membrane. Component of the USP12/WDR20/WDR48 deubiquitinating complex. Component of the USP12/DMWD/WDR48 deubiquitinating complex. Interacts with PHLPP1. Interacts with RBPJ. Interacts with CBP; this interaction blocks the acetyltransferase activity of CREBBP.</text>
</comment>
<comment type="subcellular location">
    <subcellularLocation>
        <location evidence="2">Nucleus</location>
    </subcellularLocation>
    <subcellularLocation>
        <location evidence="2">Cytoplasm</location>
    </subcellularLocation>
    <subcellularLocation>
        <location evidence="2">Cell membrane</location>
    </subcellularLocation>
    <text evidence="2">Translocates from the nucleus to the cytosol on TCR stimulation, while it translocates into the nucleus in IFN signaling. USP12/WDR20/WDR48 complex is localized mainly to the plasma membrane.</text>
</comment>
<comment type="alternative products">
    <event type="alternative splicing"/>
    <isoform>
        <id>Q9D9M2-1</id>
        <name>1</name>
        <sequence type="displayed"/>
    </isoform>
    <isoform>
        <id>Q9D9M2-2</id>
        <name>2</name>
        <sequence type="described" ref="VSP_037617"/>
    </isoform>
</comment>
<comment type="disruption phenotype">
    <text evidence="6 7">USP12-deficiency attenuates CD4(+) T-cell activation (PubMed:33941870). In addition, USP12 mutant mice show significantly reduced tumor growth when compared to WT mice. Both the frequency and number of CD4(+) or CD8(+) T-cells isolated from the tumor are significantly higher in the USP12-deletion mutant mice (PubMed:35898171).</text>
</comment>
<comment type="similarity">
    <text evidence="9">Belongs to the peptidase C19 family. USP12/USP46 subfamily.</text>
</comment>
<name>UBP12_MOUSE</name>
<proteinExistence type="evidence at transcript level"/>